<keyword id="KW-0997">Cell inner membrane</keyword>
<keyword id="KW-1003">Cell membrane</keyword>
<keyword id="KW-0407">Ion channel</keyword>
<keyword id="KW-0406">Ion transport</keyword>
<keyword id="KW-0472">Membrane</keyword>
<keyword id="KW-0812">Transmembrane</keyword>
<keyword id="KW-1133">Transmembrane helix</keyword>
<keyword id="KW-0813">Transport</keyword>
<dbReference type="EMBL" id="CP000949">
    <property type="protein sequence ID" value="ACA71298.1"/>
    <property type="molecule type" value="Genomic_DNA"/>
</dbReference>
<dbReference type="SMR" id="B1J2X0"/>
<dbReference type="STRING" id="390235.PputW619_0793"/>
<dbReference type="KEGG" id="ppw:PputW619_0793"/>
<dbReference type="eggNOG" id="COG1970">
    <property type="taxonomic scope" value="Bacteria"/>
</dbReference>
<dbReference type="HOGENOM" id="CLU_095787_0_0_6"/>
<dbReference type="OrthoDB" id="9810350at2"/>
<dbReference type="GO" id="GO:0005886">
    <property type="term" value="C:plasma membrane"/>
    <property type="evidence" value="ECO:0007669"/>
    <property type="project" value="UniProtKB-SubCell"/>
</dbReference>
<dbReference type="GO" id="GO:0008381">
    <property type="term" value="F:mechanosensitive monoatomic ion channel activity"/>
    <property type="evidence" value="ECO:0007669"/>
    <property type="project" value="UniProtKB-UniRule"/>
</dbReference>
<dbReference type="FunFam" id="1.10.1200.120:FF:000001">
    <property type="entry name" value="Large-conductance mechanosensitive channel"/>
    <property type="match status" value="1"/>
</dbReference>
<dbReference type="Gene3D" id="1.10.1200.120">
    <property type="entry name" value="Large-conductance mechanosensitive channel, MscL, domain 1"/>
    <property type="match status" value="1"/>
</dbReference>
<dbReference type="HAMAP" id="MF_00115">
    <property type="entry name" value="MscL"/>
    <property type="match status" value="1"/>
</dbReference>
<dbReference type="InterPro" id="IPR019823">
    <property type="entry name" value="Mechanosensitive_channel_CS"/>
</dbReference>
<dbReference type="InterPro" id="IPR001185">
    <property type="entry name" value="MS_channel"/>
</dbReference>
<dbReference type="InterPro" id="IPR037673">
    <property type="entry name" value="MSC/AndL"/>
</dbReference>
<dbReference type="InterPro" id="IPR036019">
    <property type="entry name" value="MscL_channel"/>
</dbReference>
<dbReference type="NCBIfam" id="TIGR00220">
    <property type="entry name" value="mscL"/>
    <property type="match status" value="1"/>
</dbReference>
<dbReference type="NCBIfam" id="NF001843">
    <property type="entry name" value="PRK00567.1-4"/>
    <property type="match status" value="1"/>
</dbReference>
<dbReference type="PANTHER" id="PTHR30266:SF2">
    <property type="entry name" value="LARGE-CONDUCTANCE MECHANOSENSITIVE CHANNEL"/>
    <property type="match status" value="1"/>
</dbReference>
<dbReference type="PANTHER" id="PTHR30266">
    <property type="entry name" value="MECHANOSENSITIVE CHANNEL MSCL"/>
    <property type="match status" value="1"/>
</dbReference>
<dbReference type="Pfam" id="PF01741">
    <property type="entry name" value="MscL"/>
    <property type="match status" value="1"/>
</dbReference>
<dbReference type="PRINTS" id="PR01264">
    <property type="entry name" value="MECHCHANNEL"/>
</dbReference>
<dbReference type="SUPFAM" id="SSF81330">
    <property type="entry name" value="Gated mechanosensitive channel"/>
    <property type="match status" value="1"/>
</dbReference>
<dbReference type="PROSITE" id="PS01327">
    <property type="entry name" value="MSCL"/>
    <property type="match status" value="1"/>
</dbReference>
<reference key="1">
    <citation type="submission" date="2008-02" db="EMBL/GenBank/DDBJ databases">
        <title>Complete sequence of Pseudomonas putida W619.</title>
        <authorList>
            <person name="Copeland A."/>
            <person name="Lucas S."/>
            <person name="Lapidus A."/>
            <person name="Barry K."/>
            <person name="Detter J.C."/>
            <person name="Glavina del Rio T."/>
            <person name="Dalin E."/>
            <person name="Tice H."/>
            <person name="Pitluck S."/>
            <person name="Chain P."/>
            <person name="Malfatti S."/>
            <person name="Shin M."/>
            <person name="Vergez L."/>
            <person name="Schmutz J."/>
            <person name="Larimer F."/>
            <person name="Land M."/>
            <person name="Hauser L."/>
            <person name="Kyrpides N."/>
            <person name="Kim E."/>
            <person name="Taghavi S."/>
            <person name="Vangronsveld D."/>
            <person name="van der Lelie D."/>
            <person name="Richardson P."/>
        </authorList>
    </citation>
    <scope>NUCLEOTIDE SEQUENCE [LARGE SCALE GENOMIC DNA]</scope>
    <source>
        <strain>W619</strain>
    </source>
</reference>
<name>MSCL_PSEPW</name>
<gene>
    <name evidence="1" type="primary">mscL</name>
    <name type="ordered locus">PputW619_0793</name>
</gene>
<comment type="function">
    <text evidence="1">Channel that opens in response to stretch forces in the membrane lipid bilayer. May participate in the regulation of osmotic pressure changes within the cell.</text>
</comment>
<comment type="subunit">
    <text evidence="1">Homopentamer.</text>
</comment>
<comment type="subcellular location">
    <subcellularLocation>
        <location evidence="1">Cell inner membrane</location>
        <topology evidence="1">Multi-pass membrane protein</topology>
    </subcellularLocation>
</comment>
<comment type="similarity">
    <text evidence="1">Belongs to the MscL family.</text>
</comment>
<organism>
    <name type="scientific">Pseudomonas putida (strain W619)</name>
    <dbReference type="NCBI Taxonomy" id="390235"/>
    <lineage>
        <taxon>Bacteria</taxon>
        <taxon>Pseudomonadati</taxon>
        <taxon>Pseudomonadota</taxon>
        <taxon>Gammaproteobacteria</taxon>
        <taxon>Pseudomonadales</taxon>
        <taxon>Pseudomonadaceae</taxon>
        <taxon>Pseudomonas</taxon>
    </lineage>
</organism>
<protein>
    <recommendedName>
        <fullName evidence="1">Large-conductance mechanosensitive channel</fullName>
    </recommendedName>
</protein>
<accession>B1J2X0</accession>
<evidence type="ECO:0000255" key="1">
    <source>
        <dbReference type="HAMAP-Rule" id="MF_00115"/>
    </source>
</evidence>
<feature type="chain" id="PRO_1000094915" description="Large-conductance mechanosensitive channel">
    <location>
        <begin position="1"/>
        <end position="139"/>
    </location>
</feature>
<feature type="transmembrane region" description="Helical" evidence="1">
    <location>
        <begin position="9"/>
        <end position="29"/>
    </location>
</feature>
<feature type="transmembrane region" description="Helical" evidence="1">
    <location>
        <begin position="79"/>
        <end position="99"/>
    </location>
</feature>
<sequence>MGMISEFKAFAVKGNVVDMAVGIIIGAAFGKIVSSFVGDIIMPPLGILIGGVDFSDLAITLKAAEGDIPAVVLAYGKFIQTVIDFVIVAFAIFMGVKAINRLKREEAVAPSAPPTPTPQETLLTEIRDLLKSQNQNRLP</sequence>
<proteinExistence type="inferred from homology"/>